<keyword id="KW-0007">Acetylation</keyword>
<keyword id="KW-0117">Actin capping</keyword>
<keyword id="KW-0009">Actin-binding</keyword>
<keyword id="KW-0597">Phosphoprotein</keyword>
<dbReference type="EMBL" id="DP000182">
    <property type="protein sequence ID" value="ABI93640.1"/>
    <property type="molecule type" value="Genomic_DNA"/>
</dbReference>
<dbReference type="RefSeq" id="XP_058580494.1">
    <property type="nucleotide sequence ID" value="XM_058724511.1"/>
</dbReference>
<dbReference type="SMR" id="Q07E36"/>
<dbReference type="GeneID" id="131509092"/>
<dbReference type="GO" id="GO:0030863">
    <property type="term" value="C:cortical cytoskeleton"/>
    <property type="evidence" value="ECO:0007669"/>
    <property type="project" value="TreeGrafter"/>
</dbReference>
<dbReference type="GO" id="GO:0008290">
    <property type="term" value="C:F-actin capping protein complex"/>
    <property type="evidence" value="ECO:0007669"/>
    <property type="project" value="InterPro"/>
</dbReference>
<dbReference type="GO" id="GO:0051015">
    <property type="term" value="F:actin filament binding"/>
    <property type="evidence" value="ECO:0007669"/>
    <property type="project" value="TreeGrafter"/>
</dbReference>
<dbReference type="GO" id="GO:0030036">
    <property type="term" value="P:actin cytoskeleton organization"/>
    <property type="evidence" value="ECO:0007669"/>
    <property type="project" value="TreeGrafter"/>
</dbReference>
<dbReference type="GO" id="GO:0051016">
    <property type="term" value="P:barbed-end actin filament capping"/>
    <property type="evidence" value="ECO:0007669"/>
    <property type="project" value="InterPro"/>
</dbReference>
<dbReference type="FunFam" id="3.30.1140.60:FF:000001">
    <property type="entry name" value="F-actin-capping protein subunit alpha"/>
    <property type="match status" value="1"/>
</dbReference>
<dbReference type="FunFam" id="3.90.1150.210:FF:000002">
    <property type="entry name" value="F-actin-capping protein subunit alpha"/>
    <property type="match status" value="1"/>
</dbReference>
<dbReference type="Gene3D" id="3.30.1140.60">
    <property type="entry name" value="F-actin capping protein, alpha subunit"/>
    <property type="match status" value="1"/>
</dbReference>
<dbReference type="Gene3D" id="3.90.1150.210">
    <property type="entry name" value="F-actin capping protein, beta subunit"/>
    <property type="match status" value="1"/>
</dbReference>
<dbReference type="InterPro" id="IPR002189">
    <property type="entry name" value="CapZ_alpha"/>
</dbReference>
<dbReference type="InterPro" id="IPR037282">
    <property type="entry name" value="CapZ_alpha/beta"/>
</dbReference>
<dbReference type="InterPro" id="IPR042276">
    <property type="entry name" value="CapZ_alpha/beta_2"/>
</dbReference>
<dbReference type="InterPro" id="IPR042489">
    <property type="entry name" value="CapZ_alpha_1"/>
</dbReference>
<dbReference type="InterPro" id="IPR017865">
    <property type="entry name" value="F-actin_cap_asu_CS"/>
</dbReference>
<dbReference type="PANTHER" id="PTHR10653">
    <property type="entry name" value="F-ACTIN-CAPPING PROTEIN SUBUNIT ALPHA"/>
    <property type="match status" value="1"/>
</dbReference>
<dbReference type="PANTHER" id="PTHR10653:SF2">
    <property type="entry name" value="F-ACTIN-CAPPING PROTEIN SUBUNIT ALPHA-2"/>
    <property type="match status" value="1"/>
</dbReference>
<dbReference type="Pfam" id="PF01267">
    <property type="entry name" value="F-actin_cap_A"/>
    <property type="match status" value="1"/>
</dbReference>
<dbReference type="PRINTS" id="PR00191">
    <property type="entry name" value="FACTINCAPA"/>
</dbReference>
<dbReference type="SUPFAM" id="SSF90096">
    <property type="entry name" value="Subunits of heterodimeric actin filament capping protein Capz"/>
    <property type="match status" value="1"/>
</dbReference>
<dbReference type="PROSITE" id="PS00748">
    <property type="entry name" value="F_ACTIN_CAPPING_A_1"/>
    <property type="match status" value="1"/>
</dbReference>
<dbReference type="PROSITE" id="PS00749">
    <property type="entry name" value="F_ACTIN_CAPPING_A_2"/>
    <property type="match status" value="1"/>
</dbReference>
<proteinExistence type="inferred from homology"/>
<comment type="function">
    <text evidence="1">F-actin-capping proteins bind in a Ca(2+)-independent manner to the fast growing ends of actin filaments (barbed end) thereby blocking the exchange of subunits at these ends. Unlike other capping proteins (such as gelsolin and severin), these proteins do not sever actin filaments (By similarity).</text>
</comment>
<comment type="subunit">
    <text evidence="1">Component of the F-actin capping complex, composed of a heterodimer of an alpha and a beta subunit. Component of the WASH complex, composed of F-actin-capping protein subunit alpha (CAPZA1, CAPZA2 or CAPZA3), F-actin-capping protein subunit beta (CAPZB), WASHC1, WASHC2, WASHC3, WASHC4 and WASHC5. Interacts with RCSD1/CAPZIP (By similarity).</text>
</comment>
<comment type="similarity">
    <text evidence="3">Belongs to the F-actin-capping protein alpha subunit family.</text>
</comment>
<feature type="initiator methionine" description="Removed" evidence="2">
    <location>
        <position position="1"/>
    </location>
</feature>
<feature type="chain" id="PRO_0000260359" description="F-actin-capping protein subunit alpha-2">
    <location>
        <begin position="2"/>
        <end position="286"/>
    </location>
</feature>
<feature type="modified residue" description="N-acetylalanine" evidence="2">
    <location>
        <position position="2"/>
    </location>
</feature>
<feature type="modified residue" description="Phosphoserine" evidence="2">
    <location>
        <position position="9"/>
    </location>
</feature>
<accession>Q07E36</accession>
<reference key="1">
    <citation type="submission" date="2006-09" db="EMBL/GenBank/DDBJ databases">
        <title>NISC comparative sequencing initiative.</title>
        <authorList>
            <person name="Antonellis A."/>
            <person name="Ayele K."/>
            <person name="Benjamin B."/>
            <person name="Blakesley R.W."/>
            <person name="Boakye A."/>
            <person name="Bouffard G.G."/>
            <person name="Brinkley C."/>
            <person name="Brooks S."/>
            <person name="Chu G."/>
            <person name="Coleman H."/>
            <person name="Engle J."/>
            <person name="Gestole M."/>
            <person name="Greene A."/>
            <person name="Guan X."/>
            <person name="Gupta J."/>
            <person name="Haghighi P."/>
            <person name="Han J."/>
            <person name="Hansen N."/>
            <person name="Ho S.-L."/>
            <person name="Hu P."/>
            <person name="Hunter G."/>
            <person name="Hurle B."/>
            <person name="Idol J.R."/>
            <person name="Kwong P."/>
            <person name="Laric P."/>
            <person name="Larson S."/>
            <person name="Lee-Lin S.-Q."/>
            <person name="Legaspi R."/>
            <person name="Madden M."/>
            <person name="Maduro Q.L."/>
            <person name="Maduro V.B."/>
            <person name="Margulies E.H."/>
            <person name="Masiello C."/>
            <person name="Maskeri B."/>
            <person name="McDowell J."/>
            <person name="Mojidi H.A."/>
            <person name="Mullikin J.C."/>
            <person name="Oestreicher J.S."/>
            <person name="Park M."/>
            <person name="Portnoy M.E."/>
            <person name="Prasad A."/>
            <person name="Puri O."/>
            <person name="Reddix-Dugue N."/>
            <person name="Schandler K."/>
            <person name="Schueler M.G."/>
            <person name="Sison C."/>
            <person name="Stantripop S."/>
            <person name="Stephen E."/>
            <person name="Taye A."/>
            <person name="Thomas J.W."/>
            <person name="Thomas P.J."/>
            <person name="Tsipouri V."/>
            <person name="Ung L."/>
            <person name="Vogt J.L."/>
            <person name="Wetherby K.D."/>
            <person name="Young A."/>
            <person name="Green E.D."/>
        </authorList>
    </citation>
    <scope>NUCLEOTIDE SEQUENCE [LARGE SCALE GENOMIC DNA]</scope>
</reference>
<organism>
    <name type="scientific">Neofelis nebulosa</name>
    <name type="common">Clouded leopard</name>
    <dbReference type="NCBI Taxonomy" id="61452"/>
    <lineage>
        <taxon>Eukaryota</taxon>
        <taxon>Metazoa</taxon>
        <taxon>Chordata</taxon>
        <taxon>Craniata</taxon>
        <taxon>Vertebrata</taxon>
        <taxon>Euteleostomi</taxon>
        <taxon>Mammalia</taxon>
        <taxon>Eutheria</taxon>
        <taxon>Laurasiatheria</taxon>
        <taxon>Carnivora</taxon>
        <taxon>Feliformia</taxon>
        <taxon>Felidae</taxon>
        <taxon>Pantherinae</taxon>
        <taxon>Neofelis</taxon>
    </lineage>
</organism>
<protein>
    <recommendedName>
        <fullName>F-actin-capping protein subunit alpha-2</fullName>
    </recommendedName>
    <alternativeName>
        <fullName>CapZ alpha-2</fullName>
    </alternativeName>
</protein>
<gene>
    <name type="primary">CAPZA2</name>
</gene>
<sequence>MADLEEQLSDEEKVRIAAKFIIHAPPGEFNEVFNDVRLLLNNDNLLREGAAHAFAQYNLDQFTPVKIEGYEDQVLITEHGDLGNGKFLDPKNRICFKFDHLRKEATDPRPYEAENAVESWRTSVETALRAYVKEHYPNGVCTVYGKKIDGQQTIIACIESHQFQAKNFWNGRWRSEWKFTITPSTTQVVGILKIQVHYYEDGNVQLVSHKDIQDSLTVSNEVQTAKEFIKIVEAAENEYQTAISENYQTMSDTTFKALRRQLPVTRTKIDWNKILSYKIGKEMQNA</sequence>
<evidence type="ECO:0000250" key="1"/>
<evidence type="ECO:0000250" key="2">
    <source>
        <dbReference type="UniProtKB" id="P47755"/>
    </source>
</evidence>
<evidence type="ECO:0000305" key="3"/>
<name>CAZA2_NEONE</name>